<evidence type="ECO:0000255" key="1">
    <source>
        <dbReference type="HAMAP-Rule" id="MF_01369"/>
    </source>
</evidence>
<evidence type="ECO:0000305" key="2"/>
<keyword id="KW-0687">Ribonucleoprotein</keyword>
<keyword id="KW-0689">Ribosomal protein</keyword>
<keyword id="KW-0694">RNA-binding</keyword>
<keyword id="KW-0699">rRNA-binding</keyword>
<organism>
    <name type="scientific">Coxiella burnetii (strain Dugway 5J108-111)</name>
    <dbReference type="NCBI Taxonomy" id="434922"/>
    <lineage>
        <taxon>Bacteria</taxon>
        <taxon>Pseudomonadati</taxon>
        <taxon>Pseudomonadota</taxon>
        <taxon>Gammaproteobacteria</taxon>
        <taxon>Legionellales</taxon>
        <taxon>Coxiellaceae</taxon>
        <taxon>Coxiella</taxon>
    </lineage>
</organism>
<reference key="1">
    <citation type="journal article" date="2009" name="Infect. Immun.">
        <title>Comparative genomics reveal extensive transposon-mediated genomic plasticity and diversity among potential effector proteins within the genus Coxiella.</title>
        <authorList>
            <person name="Beare P.A."/>
            <person name="Unsworth N."/>
            <person name="Andoh M."/>
            <person name="Voth D.E."/>
            <person name="Omsland A."/>
            <person name="Gilk S.D."/>
            <person name="Williams K.P."/>
            <person name="Sobral B.W."/>
            <person name="Kupko J.J. III"/>
            <person name="Porcella S.F."/>
            <person name="Samuel J.E."/>
            <person name="Heinzen R.A."/>
        </authorList>
    </citation>
    <scope>NUCLEOTIDE SEQUENCE [LARGE SCALE GENOMIC DNA]</scope>
    <source>
        <strain>Dugway 5J108-111</strain>
    </source>
</reference>
<comment type="function">
    <text evidence="1">One of the early assembly proteins it binds 23S rRNA. One of the proteins that surrounds the polypeptide exit tunnel on the outside of the ribosome. Forms the main docking site for trigger factor binding to the ribosome.</text>
</comment>
<comment type="subunit">
    <text evidence="1">Part of the 50S ribosomal subunit. Contacts protein L29, and trigger factor when it is bound to the ribosome.</text>
</comment>
<comment type="similarity">
    <text evidence="1">Belongs to the universal ribosomal protein uL23 family.</text>
</comment>
<accession>A9KD29</accession>
<feature type="chain" id="PRO_1000087213" description="Large ribosomal subunit protein uL23">
    <location>
        <begin position="1"/>
        <end position="95"/>
    </location>
</feature>
<sequence>MNEERLFKILLAPHISEKGALTTGQYVFEVMPDATKPEIKRAVEKQFNVTVKSVRTCNVKGKTTRFRQVRGRRKNWKKAYVMLAPGSEIDIAAGE</sequence>
<name>RL23_COXBN</name>
<gene>
    <name evidence="1" type="primary">rplW</name>
    <name type="ordered locus">CBUD_1852</name>
</gene>
<proteinExistence type="inferred from homology"/>
<protein>
    <recommendedName>
        <fullName evidence="1">Large ribosomal subunit protein uL23</fullName>
    </recommendedName>
    <alternativeName>
        <fullName evidence="2">50S ribosomal protein L23</fullName>
    </alternativeName>
</protein>
<dbReference type="EMBL" id="CP000733">
    <property type="protein sequence ID" value="ABS77830.1"/>
    <property type="molecule type" value="Genomic_DNA"/>
</dbReference>
<dbReference type="RefSeq" id="WP_005771542.1">
    <property type="nucleotide sequence ID" value="NC_009727.1"/>
</dbReference>
<dbReference type="SMR" id="A9KD29"/>
<dbReference type="KEGG" id="cbd:CBUD_1852"/>
<dbReference type="HOGENOM" id="CLU_037562_3_1_6"/>
<dbReference type="Proteomes" id="UP000008555">
    <property type="component" value="Chromosome"/>
</dbReference>
<dbReference type="GO" id="GO:1990904">
    <property type="term" value="C:ribonucleoprotein complex"/>
    <property type="evidence" value="ECO:0007669"/>
    <property type="project" value="UniProtKB-KW"/>
</dbReference>
<dbReference type="GO" id="GO:0005840">
    <property type="term" value="C:ribosome"/>
    <property type="evidence" value="ECO:0007669"/>
    <property type="project" value="UniProtKB-KW"/>
</dbReference>
<dbReference type="GO" id="GO:0019843">
    <property type="term" value="F:rRNA binding"/>
    <property type="evidence" value="ECO:0007669"/>
    <property type="project" value="UniProtKB-UniRule"/>
</dbReference>
<dbReference type="GO" id="GO:0003735">
    <property type="term" value="F:structural constituent of ribosome"/>
    <property type="evidence" value="ECO:0007669"/>
    <property type="project" value="InterPro"/>
</dbReference>
<dbReference type="GO" id="GO:0006412">
    <property type="term" value="P:translation"/>
    <property type="evidence" value="ECO:0007669"/>
    <property type="project" value="UniProtKB-UniRule"/>
</dbReference>
<dbReference type="FunFam" id="3.30.70.330:FF:000001">
    <property type="entry name" value="50S ribosomal protein L23"/>
    <property type="match status" value="1"/>
</dbReference>
<dbReference type="Gene3D" id="3.30.70.330">
    <property type="match status" value="1"/>
</dbReference>
<dbReference type="HAMAP" id="MF_01369_B">
    <property type="entry name" value="Ribosomal_uL23_B"/>
    <property type="match status" value="1"/>
</dbReference>
<dbReference type="InterPro" id="IPR012677">
    <property type="entry name" value="Nucleotide-bd_a/b_plait_sf"/>
</dbReference>
<dbReference type="InterPro" id="IPR013025">
    <property type="entry name" value="Ribosomal_uL23-like"/>
</dbReference>
<dbReference type="InterPro" id="IPR012678">
    <property type="entry name" value="Ribosomal_uL23/eL15/eS24_sf"/>
</dbReference>
<dbReference type="NCBIfam" id="NF004359">
    <property type="entry name" value="PRK05738.1-3"/>
    <property type="match status" value="1"/>
</dbReference>
<dbReference type="NCBIfam" id="NF004363">
    <property type="entry name" value="PRK05738.2-4"/>
    <property type="match status" value="1"/>
</dbReference>
<dbReference type="PANTHER" id="PTHR11620">
    <property type="entry name" value="60S RIBOSOMAL PROTEIN L23A"/>
    <property type="match status" value="1"/>
</dbReference>
<dbReference type="Pfam" id="PF00276">
    <property type="entry name" value="Ribosomal_L23"/>
    <property type="match status" value="1"/>
</dbReference>
<dbReference type="SUPFAM" id="SSF54189">
    <property type="entry name" value="Ribosomal proteins S24e, L23 and L15e"/>
    <property type="match status" value="1"/>
</dbReference>